<reference key="1">
    <citation type="submission" date="2006-12" db="EMBL/GenBank/DDBJ databases">
        <title>Complete sequence of Pyrobaculum islandicum DSM 4184.</title>
        <authorList>
            <person name="Copeland A."/>
            <person name="Lucas S."/>
            <person name="Lapidus A."/>
            <person name="Barry K."/>
            <person name="Detter J.C."/>
            <person name="Glavina del Rio T."/>
            <person name="Dalin E."/>
            <person name="Tice H."/>
            <person name="Pitluck S."/>
            <person name="Meincke L."/>
            <person name="Brettin T."/>
            <person name="Bruce D."/>
            <person name="Han C."/>
            <person name="Tapia R."/>
            <person name="Gilna P."/>
            <person name="Schmutz J."/>
            <person name="Larimer F."/>
            <person name="Land M."/>
            <person name="Hauser L."/>
            <person name="Kyrpides N."/>
            <person name="Mikhailova N."/>
            <person name="Cozen A.E."/>
            <person name="Fitz-Gibbon S.T."/>
            <person name="House C.H."/>
            <person name="Saltikov C."/>
            <person name="Lowe T."/>
            <person name="Richardson P."/>
        </authorList>
    </citation>
    <scope>NUCLEOTIDE SEQUENCE [LARGE SCALE GENOMIC DNA]</scope>
    <source>
        <strain>DSM 4184 / JCM 9189 / GEO3</strain>
    </source>
</reference>
<gene>
    <name type="ordered locus">Pisl_1005</name>
</gene>
<accession>A1RT97</accession>
<dbReference type="EMBL" id="CP000504">
    <property type="protein sequence ID" value="ABL88179.1"/>
    <property type="molecule type" value="Genomic_DNA"/>
</dbReference>
<dbReference type="RefSeq" id="WP_011762754.1">
    <property type="nucleotide sequence ID" value="NC_008701.1"/>
</dbReference>
<dbReference type="SMR" id="A1RT97"/>
<dbReference type="STRING" id="384616.Pisl_1005"/>
<dbReference type="GeneID" id="4617130"/>
<dbReference type="KEGG" id="pis:Pisl_1005"/>
<dbReference type="eggNOG" id="arCOG01336">
    <property type="taxonomic scope" value="Archaea"/>
</dbReference>
<dbReference type="HOGENOM" id="CLU_095686_1_1_2"/>
<dbReference type="OrthoDB" id="25187at2157"/>
<dbReference type="Proteomes" id="UP000002595">
    <property type="component" value="Chromosome"/>
</dbReference>
<dbReference type="Gene3D" id="3.30.700.20">
    <property type="entry name" value="Hypothetical protein ph0010, domain 1"/>
    <property type="match status" value="1"/>
</dbReference>
<dbReference type="Gene3D" id="3.30.1490.150">
    <property type="entry name" value="Hypothetical protein ph0010, domain 2"/>
    <property type="match status" value="1"/>
</dbReference>
<dbReference type="HAMAP" id="MF_00645">
    <property type="entry name" value="AMMECR1"/>
    <property type="match status" value="1"/>
</dbReference>
<dbReference type="InterPro" id="IPR023473">
    <property type="entry name" value="AMMECR1"/>
</dbReference>
<dbReference type="InterPro" id="IPR036071">
    <property type="entry name" value="AMMECR1_dom_sf"/>
</dbReference>
<dbReference type="InterPro" id="IPR002733">
    <property type="entry name" value="AMMECR1_domain"/>
</dbReference>
<dbReference type="InterPro" id="IPR027485">
    <property type="entry name" value="AMMECR1_N"/>
</dbReference>
<dbReference type="InterPro" id="IPR027623">
    <property type="entry name" value="AmmeMemoSam_A"/>
</dbReference>
<dbReference type="InterPro" id="IPR023472">
    <property type="entry name" value="Uncharacterised_MJ0810"/>
</dbReference>
<dbReference type="NCBIfam" id="TIGR04335">
    <property type="entry name" value="AmmeMemoSam_A"/>
    <property type="match status" value="1"/>
</dbReference>
<dbReference type="NCBIfam" id="TIGR00296">
    <property type="entry name" value="TIGR00296 family protein"/>
    <property type="match status" value="1"/>
</dbReference>
<dbReference type="PANTHER" id="PTHR13016:SF0">
    <property type="entry name" value="AMME SYNDROME CANDIDATE GENE 1 PROTEIN"/>
    <property type="match status" value="1"/>
</dbReference>
<dbReference type="PANTHER" id="PTHR13016">
    <property type="entry name" value="AMMECR1 HOMOLOG"/>
    <property type="match status" value="1"/>
</dbReference>
<dbReference type="Pfam" id="PF01871">
    <property type="entry name" value="AMMECR1"/>
    <property type="match status" value="1"/>
</dbReference>
<dbReference type="SUPFAM" id="SSF143447">
    <property type="entry name" value="AMMECR1-like"/>
    <property type="match status" value="1"/>
</dbReference>
<dbReference type="PROSITE" id="PS51112">
    <property type="entry name" value="AMMECR1"/>
    <property type="match status" value="1"/>
</dbReference>
<organism>
    <name type="scientific">Pyrobaculum islandicum (strain DSM 4184 / JCM 9189 / GEO3)</name>
    <dbReference type="NCBI Taxonomy" id="384616"/>
    <lineage>
        <taxon>Archaea</taxon>
        <taxon>Thermoproteota</taxon>
        <taxon>Thermoprotei</taxon>
        <taxon>Thermoproteales</taxon>
        <taxon>Thermoproteaceae</taxon>
        <taxon>Pyrobaculum</taxon>
    </lineage>
</organism>
<protein>
    <recommendedName>
        <fullName evidence="1">Protein Pisl_1005</fullName>
    </recommendedName>
</protein>
<evidence type="ECO:0000255" key="1">
    <source>
        <dbReference type="HAMAP-Rule" id="MF_00645"/>
    </source>
</evidence>
<name>Y1005_PYRIL</name>
<feature type="chain" id="PRO_1000082709" description="Protein Pisl_1005">
    <location>
        <begin position="1"/>
        <end position="221"/>
    </location>
</feature>
<feature type="domain" description="AMMECR1" evidence="1">
    <location>
        <begin position="8"/>
        <end position="201"/>
    </location>
</feature>
<proteinExistence type="inferred from homology"/>
<sequence>MFRPYTIEEGAYLVKLARSTVETFLKTGKIIIPESPPQRLLIDNYGVFTTIETVSGDRYELRGCIGYPEGYKNTLYATIYSAIGACCQDPRFPALRIDELPHVIFEVSILSPLTLLQDDPRKYPELIQVGRHGLVVRRGPYAGLLLPQVAVEECWDAEEFLLHVCMKAWLPGDCWLDRRTKLYIYEAQIFREKTPGGEIYERNLVAETAKCSPKTRRENEQ</sequence>